<reference key="1">
    <citation type="journal article" date="2002" name="J. Bacteriol.">
        <title>Whole-genome comparison of Mycobacterium tuberculosis clinical and laboratory strains.</title>
        <authorList>
            <person name="Fleischmann R.D."/>
            <person name="Alland D."/>
            <person name="Eisen J.A."/>
            <person name="Carpenter L."/>
            <person name="White O."/>
            <person name="Peterson J.D."/>
            <person name="DeBoy R.T."/>
            <person name="Dodson R.J."/>
            <person name="Gwinn M.L."/>
            <person name="Haft D.H."/>
            <person name="Hickey E.K."/>
            <person name="Kolonay J.F."/>
            <person name="Nelson W.C."/>
            <person name="Umayam L.A."/>
            <person name="Ermolaeva M.D."/>
            <person name="Salzberg S.L."/>
            <person name="Delcher A."/>
            <person name="Utterback T.R."/>
            <person name="Weidman J.F."/>
            <person name="Khouri H.M."/>
            <person name="Gill J."/>
            <person name="Mikula A."/>
            <person name="Bishai W."/>
            <person name="Jacobs W.R. Jr."/>
            <person name="Venter J.C."/>
            <person name="Fraser C.M."/>
        </authorList>
    </citation>
    <scope>NUCLEOTIDE SEQUENCE [LARGE SCALE GENOMIC DNA]</scope>
    <source>
        <strain>CDC 1551 / Oshkosh</strain>
    </source>
</reference>
<gene>
    <name type="primary">cyp137</name>
    <name type="ordered locus">MT3787</name>
</gene>
<organism>
    <name type="scientific">Mycobacterium tuberculosis (strain CDC 1551 / Oshkosh)</name>
    <dbReference type="NCBI Taxonomy" id="83331"/>
    <lineage>
        <taxon>Bacteria</taxon>
        <taxon>Bacillati</taxon>
        <taxon>Actinomycetota</taxon>
        <taxon>Actinomycetes</taxon>
        <taxon>Mycobacteriales</taxon>
        <taxon>Mycobacteriaceae</taxon>
        <taxon>Mycobacterium</taxon>
        <taxon>Mycobacterium tuberculosis complex</taxon>
    </lineage>
</organism>
<sequence>MVLRSLASPAALTDPKRCASVVGVAAFAVRREHAPDALGGPPGLPAPRGFRAAFAAAYAVAYLAGGERRMLRLIRRYGPIMTMPILSLGDVAIVSDSALAKEVFTAPTDVLLGGEGVGPAAAIYGSGSMFVQEEPEHLRRRKLLTPPLHGAALDRYVPIIENSTRAAMHTWPVDRPFAMLTVARSLMLDVIVKVIFGVDDPEEVRRLGRPFERLLNLGVSEQLTVRYALRRLGALRVWPARARANTEIDDVVMALIAQRRADPRLGERHDVLSLLVSARGESGEQLSDSEIRDDLITLVLAGHETTATTLAWAFDLLLHHPDALRRVRAEAVGGGEAFTTAVINETLRVRPPAPLTARVAAQPLTIGGYRVEAGTRIVVHIIAINRSAEVYEHPHEFRPERFLGTRPQTYAWVPFGGGVKRCLGANFSMRELITVLHVLLREGEFTAVDDEPERIVRRSIMLVPRRGTRVRFRPAR</sequence>
<proteinExistence type="inferred from homology"/>
<accession>P9WPM4</accession>
<accession>L0TDI2</accession>
<accession>O69653</accession>
<comment type="cofactor">
    <cofactor evidence="1">
        <name>heme</name>
        <dbReference type="ChEBI" id="CHEBI:30413"/>
    </cofactor>
</comment>
<comment type="similarity">
    <text evidence="2">Belongs to the cytochrome P450 family.</text>
</comment>
<feature type="chain" id="PRO_0000426926" description="Putative cytochrome P450 137">
    <location>
        <begin position="1"/>
        <end position="476"/>
    </location>
</feature>
<feature type="binding site" description="axial binding residue" evidence="1">
    <location>
        <position position="422"/>
    </location>
    <ligand>
        <name>heme</name>
        <dbReference type="ChEBI" id="CHEBI:30413"/>
    </ligand>
    <ligandPart>
        <name>Fe</name>
        <dbReference type="ChEBI" id="CHEBI:18248"/>
    </ligandPart>
</feature>
<dbReference type="EC" id="1.14.-.-"/>
<dbReference type="EMBL" id="AE000516">
    <property type="protein sequence ID" value="AAK48154.1"/>
    <property type="molecule type" value="Genomic_DNA"/>
</dbReference>
<dbReference type="PIR" id="F70791">
    <property type="entry name" value="F70791"/>
</dbReference>
<dbReference type="RefSeq" id="WP_003419754.1">
    <property type="nucleotide sequence ID" value="NZ_KK341227.1"/>
</dbReference>
<dbReference type="SMR" id="P9WPM4"/>
<dbReference type="KEGG" id="mtc:MT3787"/>
<dbReference type="PATRIC" id="fig|83331.31.peg.4078"/>
<dbReference type="HOGENOM" id="CLU_001570_5_1_11"/>
<dbReference type="Proteomes" id="UP000001020">
    <property type="component" value="Chromosome"/>
</dbReference>
<dbReference type="GO" id="GO:0020037">
    <property type="term" value="F:heme binding"/>
    <property type="evidence" value="ECO:0007669"/>
    <property type="project" value="InterPro"/>
</dbReference>
<dbReference type="GO" id="GO:0005506">
    <property type="term" value="F:iron ion binding"/>
    <property type="evidence" value="ECO:0007669"/>
    <property type="project" value="InterPro"/>
</dbReference>
<dbReference type="GO" id="GO:0004497">
    <property type="term" value="F:monooxygenase activity"/>
    <property type="evidence" value="ECO:0007669"/>
    <property type="project" value="UniProtKB-KW"/>
</dbReference>
<dbReference type="GO" id="GO:0016705">
    <property type="term" value="F:oxidoreductase activity, acting on paired donors, with incorporation or reduction of molecular oxygen"/>
    <property type="evidence" value="ECO:0007669"/>
    <property type="project" value="InterPro"/>
</dbReference>
<dbReference type="CDD" id="cd11053">
    <property type="entry name" value="CYP110-like"/>
    <property type="match status" value="1"/>
</dbReference>
<dbReference type="Gene3D" id="1.10.630.10">
    <property type="entry name" value="Cytochrome P450"/>
    <property type="match status" value="1"/>
</dbReference>
<dbReference type="InterPro" id="IPR001128">
    <property type="entry name" value="Cyt_P450"/>
</dbReference>
<dbReference type="InterPro" id="IPR017972">
    <property type="entry name" value="Cyt_P450_CS"/>
</dbReference>
<dbReference type="InterPro" id="IPR002401">
    <property type="entry name" value="Cyt_P450_E_grp-I"/>
</dbReference>
<dbReference type="InterPro" id="IPR036396">
    <property type="entry name" value="Cyt_P450_sf"/>
</dbReference>
<dbReference type="InterPro" id="IPR050121">
    <property type="entry name" value="Cytochrome_P450_monoxygenase"/>
</dbReference>
<dbReference type="PANTHER" id="PTHR24305">
    <property type="entry name" value="CYTOCHROME P450"/>
    <property type="match status" value="1"/>
</dbReference>
<dbReference type="PANTHER" id="PTHR24305:SF166">
    <property type="entry name" value="CYTOCHROME P450 12A4, MITOCHONDRIAL-RELATED"/>
    <property type="match status" value="1"/>
</dbReference>
<dbReference type="Pfam" id="PF00067">
    <property type="entry name" value="p450"/>
    <property type="match status" value="1"/>
</dbReference>
<dbReference type="PRINTS" id="PR00463">
    <property type="entry name" value="EP450I"/>
</dbReference>
<dbReference type="PRINTS" id="PR00385">
    <property type="entry name" value="P450"/>
</dbReference>
<dbReference type="SUPFAM" id="SSF48264">
    <property type="entry name" value="Cytochrome P450"/>
    <property type="match status" value="1"/>
</dbReference>
<dbReference type="PROSITE" id="PS00086">
    <property type="entry name" value="CYTOCHROME_P450"/>
    <property type="match status" value="1"/>
</dbReference>
<evidence type="ECO:0000250" key="1"/>
<evidence type="ECO:0000305" key="2"/>
<name>CP137_MYCTO</name>
<keyword id="KW-0349">Heme</keyword>
<keyword id="KW-0408">Iron</keyword>
<keyword id="KW-0479">Metal-binding</keyword>
<keyword id="KW-0503">Monooxygenase</keyword>
<keyword id="KW-0560">Oxidoreductase</keyword>
<keyword id="KW-1185">Reference proteome</keyword>
<protein>
    <recommendedName>
        <fullName>Putative cytochrome P450 137</fullName>
        <ecNumber>1.14.-.-</ecNumber>
    </recommendedName>
</protein>